<dbReference type="EC" id="6.1.1.9" evidence="1"/>
<dbReference type="EMBL" id="CP000569">
    <property type="protein sequence ID" value="ABN74586.1"/>
    <property type="molecule type" value="Genomic_DNA"/>
</dbReference>
<dbReference type="RefSeq" id="WP_009875208.1">
    <property type="nucleotide sequence ID" value="NC_009053.1"/>
</dbReference>
<dbReference type="SMR" id="A3N2F0"/>
<dbReference type="STRING" id="416269.APL_1502"/>
<dbReference type="EnsemblBacteria" id="ABN74586">
    <property type="protein sequence ID" value="ABN74586"/>
    <property type="gene ID" value="APL_1502"/>
</dbReference>
<dbReference type="KEGG" id="apl:APL_1502"/>
<dbReference type="PATRIC" id="fig|416269.6.peg.1563"/>
<dbReference type="eggNOG" id="COG0525">
    <property type="taxonomic scope" value="Bacteria"/>
</dbReference>
<dbReference type="HOGENOM" id="CLU_001493_0_2_6"/>
<dbReference type="Proteomes" id="UP000001432">
    <property type="component" value="Chromosome"/>
</dbReference>
<dbReference type="GO" id="GO:0005829">
    <property type="term" value="C:cytosol"/>
    <property type="evidence" value="ECO:0007669"/>
    <property type="project" value="TreeGrafter"/>
</dbReference>
<dbReference type="GO" id="GO:0002161">
    <property type="term" value="F:aminoacyl-tRNA deacylase activity"/>
    <property type="evidence" value="ECO:0007669"/>
    <property type="project" value="InterPro"/>
</dbReference>
<dbReference type="GO" id="GO:0005524">
    <property type="term" value="F:ATP binding"/>
    <property type="evidence" value="ECO:0007669"/>
    <property type="project" value="UniProtKB-UniRule"/>
</dbReference>
<dbReference type="GO" id="GO:0004832">
    <property type="term" value="F:valine-tRNA ligase activity"/>
    <property type="evidence" value="ECO:0007669"/>
    <property type="project" value="UniProtKB-UniRule"/>
</dbReference>
<dbReference type="GO" id="GO:0006438">
    <property type="term" value="P:valyl-tRNA aminoacylation"/>
    <property type="evidence" value="ECO:0007669"/>
    <property type="project" value="UniProtKB-UniRule"/>
</dbReference>
<dbReference type="CDD" id="cd07962">
    <property type="entry name" value="Anticodon_Ia_Val"/>
    <property type="match status" value="1"/>
</dbReference>
<dbReference type="CDD" id="cd00817">
    <property type="entry name" value="ValRS_core"/>
    <property type="match status" value="1"/>
</dbReference>
<dbReference type="FunFam" id="1.10.287.380:FF:000001">
    <property type="entry name" value="Valine--tRNA ligase"/>
    <property type="match status" value="1"/>
</dbReference>
<dbReference type="FunFam" id="1.10.730.10:FF:000007">
    <property type="entry name" value="Valine--tRNA ligase"/>
    <property type="match status" value="1"/>
</dbReference>
<dbReference type="FunFam" id="3.40.50.620:FF:000032">
    <property type="entry name" value="Valine--tRNA ligase"/>
    <property type="match status" value="1"/>
</dbReference>
<dbReference type="FunFam" id="3.40.50.620:FF:000146">
    <property type="entry name" value="Valine--tRNA ligase"/>
    <property type="match status" value="1"/>
</dbReference>
<dbReference type="FunFam" id="3.90.740.10:FF:000003">
    <property type="entry name" value="Valine--tRNA ligase"/>
    <property type="match status" value="1"/>
</dbReference>
<dbReference type="FunFam" id="3.90.740.10:FF:000004">
    <property type="entry name" value="Valine--tRNA ligase"/>
    <property type="match status" value="1"/>
</dbReference>
<dbReference type="Gene3D" id="3.40.50.620">
    <property type="entry name" value="HUPs"/>
    <property type="match status" value="2"/>
</dbReference>
<dbReference type="Gene3D" id="1.10.730.10">
    <property type="entry name" value="Isoleucyl-tRNA Synthetase, Domain 1"/>
    <property type="match status" value="1"/>
</dbReference>
<dbReference type="Gene3D" id="1.10.287.380">
    <property type="entry name" value="Valyl-tRNA synthetase, C-terminal domain"/>
    <property type="match status" value="1"/>
</dbReference>
<dbReference type="Gene3D" id="3.90.740.10">
    <property type="entry name" value="Valyl/Leucyl/Isoleucyl-tRNA synthetase, editing domain"/>
    <property type="match status" value="2"/>
</dbReference>
<dbReference type="HAMAP" id="MF_02004">
    <property type="entry name" value="Val_tRNA_synth_type1"/>
    <property type="match status" value="1"/>
</dbReference>
<dbReference type="InterPro" id="IPR001412">
    <property type="entry name" value="aa-tRNA-synth_I_CS"/>
</dbReference>
<dbReference type="InterPro" id="IPR002300">
    <property type="entry name" value="aa-tRNA-synth_Ia"/>
</dbReference>
<dbReference type="InterPro" id="IPR033705">
    <property type="entry name" value="Anticodon_Ia_Val"/>
</dbReference>
<dbReference type="InterPro" id="IPR013155">
    <property type="entry name" value="M/V/L/I-tRNA-synth_anticd-bd"/>
</dbReference>
<dbReference type="InterPro" id="IPR014729">
    <property type="entry name" value="Rossmann-like_a/b/a_fold"/>
</dbReference>
<dbReference type="InterPro" id="IPR010978">
    <property type="entry name" value="tRNA-bd_arm"/>
</dbReference>
<dbReference type="InterPro" id="IPR009080">
    <property type="entry name" value="tRNAsynth_Ia_anticodon-bd"/>
</dbReference>
<dbReference type="InterPro" id="IPR037118">
    <property type="entry name" value="Val-tRNA_synth_C_sf"/>
</dbReference>
<dbReference type="InterPro" id="IPR019499">
    <property type="entry name" value="Val-tRNA_synth_tRNA-bd"/>
</dbReference>
<dbReference type="InterPro" id="IPR009008">
    <property type="entry name" value="Val/Leu/Ile-tRNA-synth_edit"/>
</dbReference>
<dbReference type="InterPro" id="IPR002303">
    <property type="entry name" value="Valyl-tRNA_ligase"/>
</dbReference>
<dbReference type="NCBIfam" id="NF004349">
    <property type="entry name" value="PRK05729.1"/>
    <property type="match status" value="1"/>
</dbReference>
<dbReference type="NCBIfam" id="TIGR00422">
    <property type="entry name" value="valS"/>
    <property type="match status" value="1"/>
</dbReference>
<dbReference type="PANTHER" id="PTHR11946:SF93">
    <property type="entry name" value="VALINE--TRNA LIGASE, CHLOROPLASTIC_MITOCHONDRIAL 2"/>
    <property type="match status" value="1"/>
</dbReference>
<dbReference type="PANTHER" id="PTHR11946">
    <property type="entry name" value="VALYL-TRNA SYNTHETASES"/>
    <property type="match status" value="1"/>
</dbReference>
<dbReference type="Pfam" id="PF08264">
    <property type="entry name" value="Anticodon_1"/>
    <property type="match status" value="1"/>
</dbReference>
<dbReference type="Pfam" id="PF00133">
    <property type="entry name" value="tRNA-synt_1"/>
    <property type="match status" value="1"/>
</dbReference>
<dbReference type="Pfam" id="PF10458">
    <property type="entry name" value="Val_tRNA-synt_C"/>
    <property type="match status" value="1"/>
</dbReference>
<dbReference type="PRINTS" id="PR00986">
    <property type="entry name" value="TRNASYNTHVAL"/>
</dbReference>
<dbReference type="SUPFAM" id="SSF47323">
    <property type="entry name" value="Anticodon-binding domain of a subclass of class I aminoacyl-tRNA synthetases"/>
    <property type="match status" value="1"/>
</dbReference>
<dbReference type="SUPFAM" id="SSF52374">
    <property type="entry name" value="Nucleotidylyl transferase"/>
    <property type="match status" value="1"/>
</dbReference>
<dbReference type="SUPFAM" id="SSF46589">
    <property type="entry name" value="tRNA-binding arm"/>
    <property type="match status" value="1"/>
</dbReference>
<dbReference type="SUPFAM" id="SSF50677">
    <property type="entry name" value="ValRS/IleRS/LeuRS editing domain"/>
    <property type="match status" value="1"/>
</dbReference>
<dbReference type="PROSITE" id="PS00178">
    <property type="entry name" value="AA_TRNA_LIGASE_I"/>
    <property type="match status" value="1"/>
</dbReference>
<reference key="1">
    <citation type="journal article" date="2008" name="J. Bacteriol.">
        <title>The complete genome sequence of Actinobacillus pleuropneumoniae L20 (serotype 5b).</title>
        <authorList>
            <person name="Foote S.J."/>
            <person name="Bosse J.T."/>
            <person name="Bouevitch A.B."/>
            <person name="Langford P.R."/>
            <person name="Young N.M."/>
            <person name="Nash J.H.E."/>
        </authorList>
    </citation>
    <scope>NUCLEOTIDE SEQUENCE [LARGE SCALE GENOMIC DNA]</scope>
    <source>
        <strain>L20</strain>
    </source>
</reference>
<comment type="function">
    <text evidence="1">Catalyzes the attachment of valine to tRNA(Val). As ValRS can inadvertently accommodate and process structurally similar amino acids such as threonine, to avoid such errors, it has a 'posttransfer' editing activity that hydrolyzes mischarged Thr-tRNA(Val) in a tRNA-dependent manner.</text>
</comment>
<comment type="catalytic activity">
    <reaction evidence="1">
        <text>tRNA(Val) + L-valine + ATP = L-valyl-tRNA(Val) + AMP + diphosphate</text>
        <dbReference type="Rhea" id="RHEA:10704"/>
        <dbReference type="Rhea" id="RHEA-COMP:9672"/>
        <dbReference type="Rhea" id="RHEA-COMP:9708"/>
        <dbReference type="ChEBI" id="CHEBI:30616"/>
        <dbReference type="ChEBI" id="CHEBI:33019"/>
        <dbReference type="ChEBI" id="CHEBI:57762"/>
        <dbReference type="ChEBI" id="CHEBI:78442"/>
        <dbReference type="ChEBI" id="CHEBI:78537"/>
        <dbReference type="ChEBI" id="CHEBI:456215"/>
        <dbReference type="EC" id="6.1.1.9"/>
    </reaction>
</comment>
<comment type="subunit">
    <text evidence="1">Monomer.</text>
</comment>
<comment type="subcellular location">
    <subcellularLocation>
        <location evidence="1">Cytoplasm</location>
    </subcellularLocation>
</comment>
<comment type="domain">
    <text evidence="1">ValRS has two distinct active sites: one for aminoacylation and one for editing. The misactivated threonine is translocated from the active site to the editing site.</text>
</comment>
<comment type="domain">
    <text evidence="1">The C-terminal coiled-coil domain is crucial for aminoacylation activity.</text>
</comment>
<comment type="similarity">
    <text evidence="1">Belongs to the class-I aminoacyl-tRNA synthetase family. ValS type 1 subfamily.</text>
</comment>
<gene>
    <name evidence="1" type="primary">valS</name>
    <name type="ordered locus">APL_1502</name>
</gene>
<evidence type="ECO:0000255" key="1">
    <source>
        <dbReference type="HAMAP-Rule" id="MF_02004"/>
    </source>
</evidence>
<feature type="chain" id="PRO_1000073713" description="Valine--tRNA ligase">
    <location>
        <begin position="1"/>
        <end position="954"/>
    </location>
</feature>
<feature type="coiled-coil region" evidence="1">
    <location>
        <begin position="883"/>
        <end position="954"/>
    </location>
</feature>
<feature type="short sequence motif" description="'HIGH' region">
    <location>
        <begin position="48"/>
        <end position="58"/>
    </location>
</feature>
<feature type="short sequence motif" description="'KMSKS' region">
    <location>
        <begin position="560"/>
        <end position="564"/>
    </location>
</feature>
<feature type="binding site" evidence="1">
    <location>
        <position position="563"/>
    </location>
    <ligand>
        <name>ATP</name>
        <dbReference type="ChEBI" id="CHEBI:30616"/>
    </ligand>
</feature>
<keyword id="KW-0030">Aminoacyl-tRNA synthetase</keyword>
<keyword id="KW-0067">ATP-binding</keyword>
<keyword id="KW-0175">Coiled coil</keyword>
<keyword id="KW-0963">Cytoplasm</keyword>
<keyword id="KW-0436">Ligase</keyword>
<keyword id="KW-0547">Nucleotide-binding</keyword>
<keyword id="KW-0648">Protein biosynthesis</keyword>
<keyword id="KW-1185">Reference proteome</keyword>
<protein>
    <recommendedName>
        <fullName evidence="1">Valine--tRNA ligase</fullName>
        <ecNumber evidence="1">6.1.1.9</ecNumber>
    </recommendedName>
    <alternativeName>
        <fullName evidence="1">Valyl-tRNA synthetase</fullName>
        <shortName evidence="1">ValRS</shortName>
    </alternativeName>
</protein>
<sequence>MTQNLQMADRFDSSAVEQALYKHWEEQGYFKPTENPSLPSYCIAIPPPNVTGSLHMGHAFQQTLMDTLIRFNRMEGNNTLWQTGTDHAGIATQMVVERKIAAEEGKTRHDYGREAFINKIWDWKAYSGGTISQQMRRLGNSIDWDRERFTMDEGLSNAVKEVFVRLHEEGLIYRGKRLVNWDPKLHTAISDLEVENKESKGSLWHFRYPLANGAKTADGKDYLVVATTRPETVLGDTAVAVHPEDERYQSLIGKTVVLPLANREIPIVADEYVDREFGTGVVKITPAHDFNDYEVGKRHGLPMVNVMTMNADIRAEAEIIGTDGKPLTTYEAKIPADYQGLERFAARKKVVADFEALGLLDEIKPHDLKVPYGDRGGVPIEPMLTDQWYVSVKPLAEVATKAVEDGEIQFVPKQYENLYFSWMRDIQDWCISRQLWWGHRIPAWYDEAGNVYVARSEEEVRQKHNLPADLALRQDEDVLDTWFSSGLWTFSTLGWPEQTKELKMFHPTDVLITGFDIIFFWVARMIMFTMHFVKDENGKPQVPFKTVYVTGLIRDEQGQKMSKSKGNVLDPIDMIDGISLEDLLEKRTGNMMQPQLAEKIAKATRKEFENGIAAHGTDALRFTLAALASNGRDINWDMKRLEGYRNFCNKLWNASRFVLTNDKLDLSAGEVEYSLADRWIESKFNRTVGEFREALSQYRFDLAANAIYDFTWNEFCDWYLELTKPVFANGTEAQKRGASQTLVRVLEKLLRLAHPIMPFITEEIWQKVKGFAGIDADTIMLQPFPKVVKSELDESAEMQIGWIKELIIAVRNIRAESNIAPSKGLEFLVRNVSDEQRKILAENDRLLKAMAKLDSVQVLSADENAPLSVAKLVGNVEVLIPMAGFINKEAELARLTKEIEKMRGEITRIENKLGNEAFVAKAPEAVIAKEREKMQEYQNGLEKLQTQYQAIENL</sequence>
<organism>
    <name type="scientific">Actinobacillus pleuropneumoniae serotype 5b (strain L20)</name>
    <dbReference type="NCBI Taxonomy" id="416269"/>
    <lineage>
        <taxon>Bacteria</taxon>
        <taxon>Pseudomonadati</taxon>
        <taxon>Pseudomonadota</taxon>
        <taxon>Gammaproteobacteria</taxon>
        <taxon>Pasteurellales</taxon>
        <taxon>Pasteurellaceae</taxon>
        <taxon>Actinobacillus</taxon>
    </lineage>
</organism>
<proteinExistence type="inferred from homology"/>
<accession>A3N2F0</accession>
<name>SYV_ACTP2</name>